<dbReference type="EMBL" id="CP001147">
    <property type="protein sequence ID" value="ACI20788.1"/>
    <property type="molecule type" value="Genomic_DNA"/>
</dbReference>
<dbReference type="RefSeq" id="WP_012545520.1">
    <property type="nucleotide sequence ID" value="NC_011296.1"/>
</dbReference>
<dbReference type="RefSeq" id="YP_002249276.1">
    <property type="nucleotide sequence ID" value="NC_011296.1"/>
</dbReference>
<dbReference type="SMR" id="B5YG78"/>
<dbReference type="STRING" id="289376.THEYE_A1479"/>
<dbReference type="EnsemblBacteria" id="ACI20788">
    <property type="protein sequence ID" value="ACI20788"/>
    <property type="gene ID" value="THEYE_A1479"/>
</dbReference>
<dbReference type="KEGG" id="tye:THEYE_A1479"/>
<dbReference type="PATRIC" id="fig|289376.4.peg.1438"/>
<dbReference type="eggNOG" id="COG0333">
    <property type="taxonomic scope" value="Bacteria"/>
</dbReference>
<dbReference type="HOGENOM" id="CLU_129084_1_3_0"/>
<dbReference type="InParanoid" id="B5YG78"/>
<dbReference type="OrthoDB" id="9812874at2"/>
<dbReference type="Proteomes" id="UP000000718">
    <property type="component" value="Chromosome"/>
</dbReference>
<dbReference type="GO" id="GO:0022625">
    <property type="term" value="C:cytosolic large ribosomal subunit"/>
    <property type="evidence" value="ECO:0000318"/>
    <property type="project" value="GO_Central"/>
</dbReference>
<dbReference type="GO" id="GO:0003735">
    <property type="term" value="F:structural constituent of ribosome"/>
    <property type="evidence" value="ECO:0000318"/>
    <property type="project" value="GO_Central"/>
</dbReference>
<dbReference type="GO" id="GO:0006412">
    <property type="term" value="P:translation"/>
    <property type="evidence" value="ECO:0007669"/>
    <property type="project" value="UniProtKB-UniRule"/>
</dbReference>
<dbReference type="HAMAP" id="MF_00340">
    <property type="entry name" value="Ribosomal_bL32"/>
    <property type="match status" value="1"/>
</dbReference>
<dbReference type="InterPro" id="IPR002677">
    <property type="entry name" value="Ribosomal_bL32"/>
</dbReference>
<dbReference type="InterPro" id="IPR044957">
    <property type="entry name" value="Ribosomal_bL32_bact"/>
</dbReference>
<dbReference type="InterPro" id="IPR011332">
    <property type="entry name" value="Ribosomal_zn-bd"/>
</dbReference>
<dbReference type="NCBIfam" id="TIGR01031">
    <property type="entry name" value="rpmF_bact"/>
    <property type="match status" value="1"/>
</dbReference>
<dbReference type="PANTHER" id="PTHR35534">
    <property type="entry name" value="50S RIBOSOMAL PROTEIN L32"/>
    <property type="match status" value="1"/>
</dbReference>
<dbReference type="PANTHER" id="PTHR35534:SF1">
    <property type="entry name" value="LARGE RIBOSOMAL SUBUNIT PROTEIN BL32"/>
    <property type="match status" value="1"/>
</dbReference>
<dbReference type="Pfam" id="PF01783">
    <property type="entry name" value="Ribosomal_L32p"/>
    <property type="match status" value="1"/>
</dbReference>
<dbReference type="SUPFAM" id="SSF57829">
    <property type="entry name" value="Zn-binding ribosomal proteins"/>
    <property type="match status" value="1"/>
</dbReference>
<reference key="1">
    <citation type="submission" date="2008-08" db="EMBL/GenBank/DDBJ databases">
        <title>The complete genome sequence of Thermodesulfovibrio yellowstonii strain ATCC 51303 / DSM 11347 / YP87.</title>
        <authorList>
            <person name="Dodson R.J."/>
            <person name="Durkin A.S."/>
            <person name="Wu M."/>
            <person name="Eisen J."/>
            <person name="Sutton G."/>
        </authorList>
    </citation>
    <scope>NUCLEOTIDE SEQUENCE [LARGE SCALE GENOMIC DNA]</scope>
    <source>
        <strain>ATCC 51303 / DSM 11347 / YP87</strain>
    </source>
</reference>
<proteinExistence type="inferred from homology"/>
<evidence type="ECO:0000255" key="1">
    <source>
        <dbReference type="HAMAP-Rule" id="MF_00340"/>
    </source>
</evidence>
<evidence type="ECO:0000305" key="2"/>
<keyword id="KW-1185">Reference proteome</keyword>
<keyword id="KW-0687">Ribonucleoprotein</keyword>
<keyword id="KW-0689">Ribosomal protein</keyword>
<sequence>MANPRHRHTPSRRDKRRANWKATAPNLALCPECKEPKLPHRVCPNCGTYKGRKILEVEE</sequence>
<comment type="similarity">
    <text evidence="1">Belongs to the bacterial ribosomal protein bL32 family.</text>
</comment>
<feature type="chain" id="PRO_1000120185" description="Large ribosomal subunit protein bL32">
    <location>
        <begin position="1"/>
        <end position="59"/>
    </location>
</feature>
<organism>
    <name type="scientific">Thermodesulfovibrio yellowstonii (strain ATCC 51303 / DSM 11347 / YP87)</name>
    <dbReference type="NCBI Taxonomy" id="289376"/>
    <lineage>
        <taxon>Bacteria</taxon>
        <taxon>Pseudomonadati</taxon>
        <taxon>Nitrospirota</taxon>
        <taxon>Thermodesulfovibrionia</taxon>
        <taxon>Thermodesulfovibrionales</taxon>
        <taxon>Thermodesulfovibrionaceae</taxon>
        <taxon>Thermodesulfovibrio</taxon>
    </lineage>
</organism>
<name>RL32_THEYD</name>
<accession>B5YG78</accession>
<protein>
    <recommendedName>
        <fullName evidence="1">Large ribosomal subunit protein bL32</fullName>
    </recommendedName>
    <alternativeName>
        <fullName evidence="2">50S ribosomal protein L32</fullName>
    </alternativeName>
</protein>
<gene>
    <name evidence="1" type="primary">rpmF</name>
    <name type="ordered locus">THEYE_A1479</name>
</gene>